<proteinExistence type="evidence at protein level"/>
<comment type="function">
    <text evidence="6 7 8 10 15 16 18 19 21 22">Serine/threonine-protein kinase involved in the control of the cell cycle and differentiation; promotes G1/S transition. Phosphorylates pRB/RB1 and NPM1. Interacts with D-type G1 cyclins during interphase at G1 to form a pRB/RB1 kinase and controls the entrance into the cell cycle. Involved in initiation and maintenance of cell cycle exit during cell differentiation; prevents cell proliferation and negatively regulates cell differentiation, but is required for the proliferation of specific cell types (e.g. erythroid and hematopoietic cells). Essential for cell proliferation within the dentate gyrus of the hippocampus and the subventricular zone of the lateral ventricles. Required during thymocyte development. Promotes the production of newborn neurons, probably by modulating G1 length. Promotes, at least in astrocytes, changes in patterns of gene expression, changes in the actin cytoskeleton including loss of stress fibers, and enhanced motility during cell differentiation. Prevents myeloid differentiation by interfering with RUNX1 and reducing its transcription transactivation activity, but promotes proliferation of normal myeloid progenitors. Delays senescence. Promotes the proliferation of beta-cells in pancreatic islets of Langerhans. May play a role in the centrosome organization during the cell cycle phases (PubMed:23918663).</text>
</comment>
<comment type="catalytic activity">
    <reaction>
        <text>L-seryl-[protein] + ATP = O-phospho-L-seryl-[protein] + ADP + H(+)</text>
        <dbReference type="Rhea" id="RHEA:17989"/>
        <dbReference type="Rhea" id="RHEA-COMP:9863"/>
        <dbReference type="Rhea" id="RHEA-COMP:11604"/>
        <dbReference type="ChEBI" id="CHEBI:15378"/>
        <dbReference type="ChEBI" id="CHEBI:29999"/>
        <dbReference type="ChEBI" id="CHEBI:30616"/>
        <dbReference type="ChEBI" id="CHEBI:83421"/>
        <dbReference type="ChEBI" id="CHEBI:456216"/>
        <dbReference type="EC" id="2.7.11.22"/>
    </reaction>
</comment>
<comment type="catalytic activity">
    <reaction>
        <text>L-threonyl-[protein] + ATP = O-phospho-L-threonyl-[protein] + ADP + H(+)</text>
        <dbReference type="Rhea" id="RHEA:46608"/>
        <dbReference type="Rhea" id="RHEA-COMP:11060"/>
        <dbReference type="Rhea" id="RHEA-COMP:11605"/>
        <dbReference type="ChEBI" id="CHEBI:15378"/>
        <dbReference type="ChEBI" id="CHEBI:30013"/>
        <dbReference type="ChEBI" id="CHEBI:30616"/>
        <dbReference type="ChEBI" id="CHEBI:61977"/>
        <dbReference type="ChEBI" id="CHEBI:456216"/>
        <dbReference type="EC" id="2.7.11.22"/>
    </reaction>
</comment>
<comment type="activity regulation">
    <text evidence="1 6">Inhibited by INK4 proteins (CDKN2C/p18-INK4c), aminopurvalanol, PD0332991, 4-(Pyrazol-4-yl)-pyrimidines and fisetin, a flavonol inhibitor. Activated by Thr-177 phosphorylation and Tyr-24 dephosphorylation (By similarity). Stimulated by cyclin from herpesvirus saimiri (V-cyclin/ECLF2). Rapidly down-regulated prior to cell differentiation (e.g. erythroid and osteoblast).</text>
</comment>
<comment type="subunit">
    <text evidence="1 4 5 9 11 13 16 18 20 22 23">Interaction with D-type G1 cyclins. Cyclin binding promotes enzyme activation by phosphorylation at Thr-177 (By similarity). Binds to RUNX1, CDKN2D, FBXO7 and CDKN2C/p18-INK4c. Forms a cytoplasmic complex with Hsp90/HSP90AB1 and CDC37. FBXO7-binding promotes D-type cyclin binding. Interacts with Kaposi's sarcoma herpesvirus (KSHV) V-cyclin and herpesvirus saimiri (V-cyclin/ECLF2); the CDK6/V-cyclin complex phosphorylates NPM1 and thus lead to viral reactivation by reducing viral LANA levels.</text>
</comment>
<comment type="interaction">
    <interactant intactId="EBI-295663">
        <id>Q00534</id>
    </interactant>
    <interactant intactId="EBI-12819523">
        <id>P41238</id>
        <label>APOBEC1</label>
    </interactant>
    <organismsDiffer>false</organismsDiffer>
    <experiments>3</experiments>
</comment>
<comment type="interaction">
    <interactant intactId="EBI-295663">
        <id>Q00534</id>
    </interactant>
    <interactant intactId="EBI-21879592">
        <id>Q8N5C1</id>
        <label>CALHM5</label>
    </interactant>
    <organismsDiffer>false</organismsDiffer>
    <experiments>2</experiments>
</comment>
<comment type="interaction">
    <interactant intactId="EBI-295663">
        <id>Q00534</id>
    </interactant>
    <interactant intactId="EBI-375001">
        <id>P24385</id>
        <label>CCND1</label>
    </interactant>
    <organismsDiffer>false</organismsDiffer>
    <experiments>7</experiments>
</comment>
<comment type="interaction">
    <interactant intactId="EBI-295663">
        <id>Q00534</id>
    </interactant>
    <interactant intactId="EBI-375013">
        <id>P30281</id>
        <label>CCND3</label>
    </interactant>
    <organismsDiffer>false</organismsDiffer>
    <experiments>34</experiments>
</comment>
<comment type="interaction">
    <interactant intactId="EBI-295663">
        <id>Q00534</id>
    </interactant>
    <interactant intactId="EBI-741406">
        <id>P51946</id>
        <label>CCNH</label>
    </interactant>
    <organismsDiffer>false</organismsDiffer>
    <experiments>5</experiments>
</comment>
<comment type="interaction">
    <interactant intactId="EBI-295663">
        <id>Q00534</id>
    </interactant>
    <interactant intactId="EBI-1104653">
        <id>Q14094</id>
        <label>CCNI</label>
    </interactant>
    <organismsDiffer>false</organismsDiffer>
    <experiments>3</experiments>
</comment>
<comment type="interaction">
    <interactant intactId="EBI-295663">
        <id>Q00534</id>
    </interactant>
    <interactant intactId="EBI-295634">
        <id>Q16543</id>
        <label>CDC37</label>
    </interactant>
    <organismsDiffer>false</organismsDiffer>
    <experiments>4</experiments>
</comment>
<comment type="interaction">
    <interactant intactId="EBI-295663">
        <id>Q00534</id>
    </interactant>
    <interactant intactId="EBI-375077">
        <id>P38936</id>
        <label>CDKN1A</label>
    </interactant>
    <organismsDiffer>false</organismsDiffer>
    <experiments>4</experiments>
</comment>
<comment type="interaction">
    <interactant intactId="EBI-295663">
        <id>Q00534</id>
    </interactant>
    <interactant intactId="EBI-375053">
        <id>P42771</id>
        <label>CDKN2A</label>
    </interactant>
    <organismsDiffer>false</organismsDiffer>
    <experiments>19</experiments>
</comment>
<comment type="interaction">
    <interactant intactId="EBI-295663">
        <id>Q00534</id>
    </interactant>
    <interactant intactId="EBI-711280">
        <id>P42772</id>
        <label>CDKN2B</label>
    </interactant>
    <organismsDiffer>false</organismsDiffer>
    <experiments>19</experiments>
</comment>
<comment type="interaction">
    <interactant intactId="EBI-295663">
        <id>Q00534</id>
    </interactant>
    <interactant intactId="EBI-711290">
        <id>P42773</id>
        <label>CDKN2C</label>
    </interactant>
    <organismsDiffer>false</organismsDiffer>
    <experiments>28</experiments>
</comment>
<comment type="interaction">
    <interactant intactId="EBI-295663">
        <id>Q00534</id>
    </interactant>
    <interactant intactId="EBI-745859">
        <id>P55273</id>
        <label>CDKN2D</label>
    </interactant>
    <organismsDiffer>false</organismsDiffer>
    <experiments>26</experiments>
</comment>
<comment type="interaction">
    <interactant intactId="EBI-295663">
        <id>Q00534</id>
    </interactant>
    <interactant intactId="EBI-866499">
        <id>Q08050-1</id>
        <label>FOXM1</label>
    </interactant>
    <organismsDiffer>false</organismsDiffer>
    <experiments>2</experiments>
</comment>
<comment type="interaction">
    <interactant intactId="EBI-295663">
        <id>Q00534</id>
    </interactant>
    <interactant intactId="EBI-352572">
        <id>P08238</id>
        <label>HSP90AB1</label>
    </interactant>
    <organismsDiffer>false</organismsDiffer>
    <experiments>3</experiments>
</comment>
<comment type="interaction">
    <interactant intactId="EBI-295663">
        <id>Q00534</id>
    </interactant>
    <interactant intactId="EBI-12865884">
        <id>Q5XKR4</id>
        <label>OTP</label>
    </interactant>
    <organismsDiffer>false</organismsDiffer>
    <experiments>3</experiments>
</comment>
<comment type="interaction">
    <interactant intactId="EBI-295663">
        <id>Q00534</id>
    </interactant>
    <interactant intactId="EBI-925904">
        <id>Q01196</id>
        <label>RUNX1</label>
    </interactant>
    <organismsDiffer>false</organismsDiffer>
    <experiments>5</experiments>
</comment>
<comment type="interaction">
    <interactant intactId="EBI-295663">
        <id>Q00534</id>
    </interactant>
    <interactant intactId="EBI-398885">
        <id>Q16629</id>
        <label>SRSF7</label>
    </interactant>
    <organismsDiffer>false</organismsDiffer>
    <experiments>2</experiments>
</comment>
<comment type="interaction">
    <interactant intactId="EBI-295663">
        <id>Q00534</id>
    </interactant>
    <interactant intactId="EBI-2342111">
        <id>Q9C019</id>
        <label>TRIM15</label>
    </interactant>
    <organismsDiffer>false</organismsDiffer>
    <experiments>3</experiments>
</comment>
<comment type="subcellular location">
    <subcellularLocation>
        <location>Cytoplasm</location>
    </subcellularLocation>
    <subcellularLocation>
        <location>Nucleus</location>
    </subcellularLocation>
    <subcellularLocation>
        <location>Cell projection</location>
        <location>Ruffle</location>
    </subcellularLocation>
    <subcellularLocation>
        <location evidence="21">Cytoplasm</location>
        <location evidence="21">Cytoskeleton</location>
        <location evidence="21">Microtubule organizing center</location>
        <location evidence="21">Centrosome</location>
    </subcellularLocation>
    <text evidence="2 21">Localized to the ruffling edge of spreading fibroblasts. Kinase activity only in nucleus. Localized to the cytosol of neurons and showed prominent staining around either side of the nucleus (By similarity). Present in the cytosol and in the nucleus in interphase cells and at the centrosome during mitosis from prophase to telophase (PubMed:23918663).</text>
</comment>
<comment type="tissue specificity">
    <text evidence="19 22">Expressed ubiquitously. Accumulates in squamous cell carcinomas, proliferating hematopoietic progenitor cells, beta-cells of pancreatic islets of Langerhans, and neuroblastomas. Reduced levels in differentiating cells.</text>
</comment>
<comment type="induction">
    <text evidence="12 17">Down-regulated in response to enterovirus 71 (EV71) infection. Induced by NANOG during S-phase entry.</text>
</comment>
<comment type="PTM">
    <text evidence="5">Thr-177 phosphorylation and Tyr-24 dephosphorylation promotes kinase activity.</text>
</comment>
<comment type="polymorphism">
    <text>Genetic variations in CDK6 may influence stature as a quantitative trait, contributing to the stature quantitative trait locus 11 (STQTL11) [MIM:612223]. Adult height is an easily observable and highly heritable complex continuous trait. Because of this, it is a model trait for studying genetic influence on quantitative traits.</text>
</comment>
<comment type="disease" evidence="21">
    <disease id="DI-04262">
        <name>Microcephaly 12, primary, autosomal recessive</name>
        <acronym>MCPH12</acronym>
        <description>A form of microcephaly, a disease defined as a head circumference more than 3 standard deviations below the age-related mean. Brain weight is markedly reduced and the cerebral cortex is disproportionately small.</description>
        <dbReference type="MIM" id="616080"/>
    </disease>
    <text>The disease is caused by variants affecting the gene represented in this entry.</text>
</comment>
<comment type="miscellaneous">
    <text>Over-expressed in some leukemias and malignancies (including sarcoma, glioma, breast tumors, lymphoma and melanoma) as a consequence of nearby translocations.</text>
</comment>
<comment type="miscellaneous">
    <text>Enhances beta-cells engraftment in pancreatic islets of Langerhans of diabetic patients.</text>
</comment>
<comment type="similarity">
    <text evidence="24">Belongs to the protein kinase superfamily. CMGC Ser/Thr protein kinase family. CDC2/CDKX subfamily.</text>
</comment>
<protein>
    <recommendedName>
        <fullName>Cyclin-dependent kinase 6</fullName>
        <ecNumber>2.7.11.22</ecNumber>
    </recommendedName>
    <alternativeName>
        <fullName>Cell division protein kinase 6</fullName>
    </alternativeName>
    <alternativeName>
        <fullName>Serine/threonine-protein kinase PLSTIRE</fullName>
    </alternativeName>
</protein>
<organism>
    <name type="scientific">Homo sapiens</name>
    <name type="common">Human</name>
    <dbReference type="NCBI Taxonomy" id="9606"/>
    <lineage>
        <taxon>Eukaryota</taxon>
        <taxon>Metazoa</taxon>
        <taxon>Chordata</taxon>
        <taxon>Craniata</taxon>
        <taxon>Vertebrata</taxon>
        <taxon>Euteleostomi</taxon>
        <taxon>Mammalia</taxon>
        <taxon>Eutheria</taxon>
        <taxon>Euarchontoglires</taxon>
        <taxon>Primates</taxon>
        <taxon>Haplorrhini</taxon>
        <taxon>Catarrhini</taxon>
        <taxon>Hominidae</taxon>
        <taxon>Homo</taxon>
    </lineage>
</organism>
<keyword id="KW-0002">3D-structure</keyword>
<keyword id="KW-0007">Acetylation</keyword>
<keyword id="KW-0067">ATP-binding</keyword>
<keyword id="KW-0131">Cell cycle</keyword>
<keyword id="KW-0132">Cell division</keyword>
<keyword id="KW-0966">Cell projection</keyword>
<keyword id="KW-0963">Cytoplasm</keyword>
<keyword id="KW-0206">Cytoskeleton</keyword>
<keyword id="KW-0221">Differentiation</keyword>
<keyword id="KW-0225">Disease variant</keyword>
<keyword id="KW-0418">Kinase</keyword>
<keyword id="KW-0547">Nucleotide-binding</keyword>
<keyword id="KW-0539">Nucleus</keyword>
<keyword id="KW-0597">Phosphoprotein</keyword>
<keyword id="KW-0905">Primary microcephaly</keyword>
<keyword id="KW-1267">Proteomics identification</keyword>
<keyword id="KW-1185">Reference proteome</keyword>
<keyword id="KW-0723">Serine/threonine-protein kinase</keyword>
<keyword id="KW-0808">Transferase</keyword>
<sequence>MEKDGLCRADQQYECVAEIGEGAYGKVFKARDLKNGGRFVALKRVRVQTGEEGMPLSTIREVAVLRHLETFEHPNVVRLFDVCTVSRTDRETKLTLVFEHVDQDLTTYLDKVPEPGVPTETIKDMMFQLLRGLDFLHSHRVVHRDLKPQNILVTSSGQIKLADFGLARIYSFQMALTSVVVTLWYRAPEVLLQSSYATPVDLWSVGCIFAEMFRRKPLFRGSSDVDQLGKILDVIGLPGEEDWPRDVALPRQAFHSKSAQPIEKFVTDIDELGKDLLLKCLTFNPAKRISAYSALSHPYFQDLERCKENLDSHLPPSQNTSELNTA</sequence>
<dbReference type="EC" id="2.7.11.22"/>
<dbReference type="EMBL" id="X66365">
    <property type="protein sequence ID" value="CAA47008.1"/>
    <property type="molecule type" value="mRNA"/>
</dbReference>
<dbReference type="EMBL" id="AY128534">
    <property type="protein sequence ID" value="AAM76970.1"/>
    <property type="molecule type" value="Genomic_DNA"/>
</dbReference>
<dbReference type="EMBL" id="AK313491">
    <property type="protein sequence ID" value="BAG36273.1"/>
    <property type="molecule type" value="mRNA"/>
</dbReference>
<dbReference type="EMBL" id="AC000065">
    <property type="status" value="NOT_ANNOTATED_CDS"/>
    <property type="molecule type" value="Genomic_DNA"/>
</dbReference>
<dbReference type="EMBL" id="AC004128">
    <property type="status" value="NOT_ANNOTATED_CDS"/>
    <property type="molecule type" value="Genomic_DNA"/>
</dbReference>
<dbReference type="EMBL" id="AC004011">
    <property type="status" value="NOT_ANNOTATED_CDS"/>
    <property type="molecule type" value="Genomic_DNA"/>
</dbReference>
<dbReference type="EMBL" id="CH236949">
    <property type="protein sequence ID" value="EAL24146.1"/>
    <property type="molecule type" value="Genomic_DNA"/>
</dbReference>
<dbReference type="EMBL" id="CH471091">
    <property type="protein sequence ID" value="EAW76827.1"/>
    <property type="molecule type" value="Genomic_DNA"/>
</dbReference>
<dbReference type="EMBL" id="BC052264">
    <property type="protein sequence ID" value="AAH52264.1"/>
    <property type="molecule type" value="mRNA"/>
</dbReference>
<dbReference type="CCDS" id="CCDS5628.1"/>
<dbReference type="PIR" id="S23387">
    <property type="entry name" value="S23387"/>
</dbReference>
<dbReference type="RefSeq" id="NP_001138778.1">
    <property type="nucleotide sequence ID" value="NM_001145306.2"/>
</dbReference>
<dbReference type="RefSeq" id="NP_001250.1">
    <property type="nucleotide sequence ID" value="NM_001259.8"/>
</dbReference>
<dbReference type="RefSeq" id="XP_006715898.1">
    <property type="nucleotide sequence ID" value="XM_006715835.2"/>
</dbReference>
<dbReference type="RefSeq" id="XP_047275672.1">
    <property type="nucleotide sequence ID" value="XM_047419716.1"/>
</dbReference>
<dbReference type="PDB" id="1BI7">
    <property type="method" value="X-ray"/>
    <property type="resolution" value="3.40 A"/>
    <property type="chains" value="A=1-326"/>
</dbReference>
<dbReference type="PDB" id="1BI8">
    <property type="method" value="X-ray"/>
    <property type="resolution" value="2.80 A"/>
    <property type="chains" value="A/C=1-326"/>
</dbReference>
<dbReference type="PDB" id="1BLX">
    <property type="method" value="X-ray"/>
    <property type="resolution" value="1.90 A"/>
    <property type="chains" value="A=1-326"/>
</dbReference>
<dbReference type="PDB" id="1G3N">
    <property type="method" value="X-ray"/>
    <property type="resolution" value="2.90 A"/>
    <property type="chains" value="A/E=1-326"/>
</dbReference>
<dbReference type="PDB" id="1JOW">
    <property type="method" value="X-ray"/>
    <property type="resolution" value="3.10 A"/>
    <property type="chains" value="B=1-308"/>
</dbReference>
<dbReference type="PDB" id="1XO2">
    <property type="method" value="X-ray"/>
    <property type="resolution" value="2.90 A"/>
    <property type="chains" value="B=1-308"/>
</dbReference>
<dbReference type="PDB" id="2EUF">
    <property type="method" value="X-ray"/>
    <property type="resolution" value="3.00 A"/>
    <property type="chains" value="B=1-308"/>
</dbReference>
<dbReference type="PDB" id="2F2C">
    <property type="method" value="X-ray"/>
    <property type="resolution" value="2.80 A"/>
    <property type="chains" value="B=1-308"/>
</dbReference>
<dbReference type="PDB" id="3NUP">
    <property type="method" value="X-ray"/>
    <property type="resolution" value="2.60 A"/>
    <property type="chains" value="A=1-301"/>
</dbReference>
<dbReference type="PDB" id="3NUX">
    <property type="method" value="X-ray"/>
    <property type="resolution" value="2.70 A"/>
    <property type="chains" value="A=1-301"/>
</dbReference>
<dbReference type="PDB" id="4AUA">
    <property type="method" value="X-ray"/>
    <property type="resolution" value="2.31 A"/>
    <property type="chains" value="A=1-301"/>
</dbReference>
<dbReference type="PDB" id="4EZ5">
    <property type="method" value="X-ray"/>
    <property type="resolution" value="2.70 A"/>
    <property type="chains" value="A=1-301"/>
</dbReference>
<dbReference type="PDB" id="4TTH">
    <property type="method" value="X-ray"/>
    <property type="resolution" value="2.90 A"/>
    <property type="chains" value="B=1-326"/>
</dbReference>
<dbReference type="PDB" id="5L2I">
    <property type="method" value="X-ray"/>
    <property type="resolution" value="2.75 A"/>
    <property type="chains" value="A=1-301"/>
</dbReference>
<dbReference type="PDB" id="5L2S">
    <property type="method" value="X-ray"/>
    <property type="resolution" value="2.27 A"/>
    <property type="chains" value="A=1-301"/>
</dbReference>
<dbReference type="PDB" id="5L2T">
    <property type="method" value="X-ray"/>
    <property type="resolution" value="2.37 A"/>
    <property type="chains" value="A=1-301"/>
</dbReference>
<dbReference type="PDB" id="6OQL">
    <property type="method" value="X-ray"/>
    <property type="resolution" value="2.71 A"/>
    <property type="chains" value="A=11-301"/>
</dbReference>
<dbReference type="PDB" id="6OQO">
    <property type="method" value="X-ray"/>
    <property type="resolution" value="1.98 A"/>
    <property type="chains" value="A=11-301"/>
</dbReference>
<dbReference type="PDB" id="8I0M">
    <property type="method" value="X-ray"/>
    <property type="resolution" value="2.78 A"/>
    <property type="chains" value="A=1-301"/>
</dbReference>
<dbReference type="PDBsum" id="1BI7"/>
<dbReference type="PDBsum" id="1BI8"/>
<dbReference type="PDBsum" id="1BLX"/>
<dbReference type="PDBsum" id="1G3N"/>
<dbReference type="PDBsum" id="1JOW"/>
<dbReference type="PDBsum" id="1XO2"/>
<dbReference type="PDBsum" id="2EUF"/>
<dbReference type="PDBsum" id="2F2C"/>
<dbReference type="PDBsum" id="3NUP"/>
<dbReference type="PDBsum" id="3NUX"/>
<dbReference type="PDBsum" id="4AUA"/>
<dbReference type="PDBsum" id="4EZ5"/>
<dbReference type="PDBsum" id="4TTH"/>
<dbReference type="PDBsum" id="5L2I"/>
<dbReference type="PDBsum" id="5L2S"/>
<dbReference type="PDBsum" id="5L2T"/>
<dbReference type="PDBsum" id="6OQL"/>
<dbReference type="PDBsum" id="6OQO"/>
<dbReference type="PDBsum" id="8I0M"/>
<dbReference type="SMR" id="Q00534"/>
<dbReference type="BioGRID" id="107456">
    <property type="interactions" value="221"/>
</dbReference>
<dbReference type="ComplexPortal" id="CPX-2013">
    <property type="entry name" value="Cyclin D3-CDK6 complex"/>
</dbReference>
<dbReference type="ComplexPortal" id="CPX-2014">
    <property type="entry name" value="Cyclin D1-CDK6 complex"/>
</dbReference>
<dbReference type="CORUM" id="Q00534"/>
<dbReference type="DIP" id="DIP-687N"/>
<dbReference type="FunCoup" id="Q00534">
    <property type="interactions" value="2204"/>
</dbReference>
<dbReference type="IntAct" id="Q00534">
    <property type="interactions" value="132"/>
</dbReference>
<dbReference type="MINT" id="Q00534"/>
<dbReference type="STRING" id="9606.ENSP00000265734"/>
<dbReference type="BindingDB" id="Q00534"/>
<dbReference type="ChEMBL" id="CHEMBL2508"/>
<dbReference type="DrugBank" id="DB07379">
    <property type="generic name" value="(2S)-2-({6-[(3-Amino-5-chlorophenyl)amino]-9-isopropyl-9H-purin-2-yl}amino)-3-methyl-1-butanol"/>
</dbReference>
<dbReference type="DrugBank" id="DB12001">
    <property type="generic name" value="Abemaciclib"/>
</dbReference>
<dbReference type="DrugBank" id="DB03496">
    <property type="generic name" value="Alvocidib"/>
</dbReference>
<dbReference type="DrugBank" id="DB07352">
    <property type="generic name" value="Apigenin"/>
</dbReference>
<dbReference type="DrugBank" id="DB05676">
    <property type="generic name" value="Apremilast"/>
</dbReference>
<dbReference type="DrugBank" id="DB15581">
    <property type="generic name" value="Chrysin"/>
</dbReference>
<dbReference type="DrugBank" id="DB07795">
    <property type="generic name" value="Fisetin"/>
</dbReference>
<dbReference type="DrugBank" id="DB17383">
    <property type="generic name" value="FN-1501"/>
</dbReference>
<dbReference type="DrugBank" id="DB16218">
    <property type="generic name" value="Lerociclib"/>
</dbReference>
<dbReference type="DrugBank" id="DB09073">
    <property type="generic name" value="Palbociclib"/>
</dbReference>
<dbReference type="DrugBank" id="DB11730">
    <property type="generic name" value="Ribociclib"/>
</dbReference>
<dbReference type="DrugBank" id="DB15442">
    <property type="generic name" value="Trilaciclib"/>
</dbReference>
<dbReference type="DrugCentral" id="Q00534"/>
<dbReference type="GuidetoPHARMACOLOGY" id="1978"/>
<dbReference type="MoonDB" id="Q00534">
    <property type="type" value="Predicted"/>
</dbReference>
<dbReference type="iPTMnet" id="Q00534"/>
<dbReference type="MetOSite" id="Q00534"/>
<dbReference type="PhosphoSitePlus" id="Q00534"/>
<dbReference type="SwissPalm" id="Q00534"/>
<dbReference type="BioMuta" id="CDK6"/>
<dbReference type="DMDM" id="266423"/>
<dbReference type="CPTAC" id="CPTAC-2932"/>
<dbReference type="CPTAC" id="CPTAC-2933"/>
<dbReference type="jPOST" id="Q00534"/>
<dbReference type="MassIVE" id="Q00534"/>
<dbReference type="PaxDb" id="9606-ENSP00000265734"/>
<dbReference type="PeptideAtlas" id="Q00534"/>
<dbReference type="ProteomicsDB" id="57851"/>
<dbReference type="Pumba" id="Q00534"/>
<dbReference type="Antibodypedia" id="1130">
    <property type="antibodies" value="987 antibodies from 44 providers"/>
</dbReference>
<dbReference type="DNASU" id="1021"/>
<dbReference type="Ensembl" id="ENST00000265734.8">
    <property type="protein sequence ID" value="ENSP00000265734.4"/>
    <property type="gene ID" value="ENSG00000105810.10"/>
</dbReference>
<dbReference type="Ensembl" id="ENST00000424848.3">
    <property type="protein sequence ID" value="ENSP00000397087.3"/>
    <property type="gene ID" value="ENSG00000105810.10"/>
</dbReference>
<dbReference type="GeneID" id="1021"/>
<dbReference type="KEGG" id="hsa:1021"/>
<dbReference type="MANE-Select" id="ENST00000424848.3">
    <property type="protein sequence ID" value="ENSP00000397087.3"/>
    <property type="RefSeq nucleotide sequence ID" value="NM_001145306.2"/>
    <property type="RefSeq protein sequence ID" value="NP_001138778.1"/>
</dbReference>
<dbReference type="UCSC" id="uc010lez.4">
    <property type="organism name" value="human"/>
</dbReference>
<dbReference type="AGR" id="HGNC:1777"/>
<dbReference type="CTD" id="1021"/>
<dbReference type="DisGeNET" id="1021"/>
<dbReference type="GeneCards" id="CDK6"/>
<dbReference type="HGNC" id="HGNC:1777">
    <property type="gene designation" value="CDK6"/>
</dbReference>
<dbReference type="HPA" id="ENSG00000105810">
    <property type="expression patterns" value="Tissue enhanced (lymphoid)"/>
</dbReference>
<dbReference type="MalaCards" id="CDK6"/>
<dbReference type="MIM" id="603368">
    <property type="type" value="gene"/>
</dbReference>
<dbReference type="MIM" id="612223">
    <property type="type" value="phenotype"/>
</dbReference>
<dbReference type="MIM" id="616080">
    <property type="type" value="phenotype"/>
</dbReference>
<dbReference type="neXtProt" id="NX_Q00534"/>
<dbReference type="OpenTargets" id="ENSG00000105810"/>
<dbReference type="Orphanet" id="2512">
    <property type="disease" value="Autosomal recessive primary microcephaly"/>
</dbReference>
<dbReference type="PharmGKB" id="PA103"/>
<dbReference type="VEuPathDB" id="HostDB:ENSG00000105810"/>
<dbReference type="eggNOG" id="KOG0594">
    <property type="taxonomic scope" value="Eukaryota"/>
</dbReference>
<dbReference type="GeneTree" id="ENSGT00940000157957"/>
<dbReference type="HOGENOM" id="CLU_000288_181_1_1"/>
<dbReference type="InParanoid" id="Q00534"/>
<dbReference type="OMA" id="YEEHRVI"/>
<dbReference type="OrthoDB" id="1732493at2759"/>
<dbReference type="PAN-GO" id="Q00534">
    <property type="GO annotations" value="6 GO annotations based on evolutionary models"/>
</dbReference>
<dbReference type="PhylomeDB" id="Q00534"/>
<dbReference type="TreeFam" id="TF101022"/>
<dbReference type="BRENDA" id="2.7.11.22">
    <property type="organism ID" value="2681"/>
</dbReference>
<dbReference type="PathwayCommons" id="Q00534"/>
<dbReference type="Reactome" id="R-HSA-2559580">
    <property type="pathway name" value="Oxidative Stress Induced Senescence"/>
</dbReference>
<dbReference type="Reactome" id="R-HSA-2559582">
    <property type="pathway name" value="Senescence-Associated Secretory Phenotype (SASP)"/>
</dbReference>
<dbReference type="Reactome" id="R-HSA-2559585">
    <property type="pathway name" value="Oncogene Induced Senescence"/>
</dbReference>
<dbReference type="Reactome" id="R-HSA-69231">
    <property type="pathway name" value="Cyclin D associated events in G1"/>
</dbReference>
<dbReference type="Reactome" id="R-HSA-8934593">
    <property type="pathway name" value="Regulation of RUNX1 Expression and Activity"/>
</dbReference>
<dbReference type="Reactome" id="R-HSA-9630794">
    <property type="pathway name" value="Evasion of Oncogene Induced Senescence Due to Defective p16INK4A binding to CDK4 and CDK6"/>
</dbReference>
<dbReference type="Reactome" id="R-HSA-9632700">
    <property type="pathway name" value="Evasion of Oxidative Stress Induced Senescence Due to Defective p16INK4A binding to CDK4 and CDK6"/>
</dbReference>
<dbReference type="Reactome" id="R-HSA-9661069">
    <property type="pathway name" value="Defective binding of RB1 mutants to E2F1,(E2F2, E2F3)"/>
</dbReference>
<dbReference type="Reactome" id="R-HSA-9754119">
    <property type="pathway name" value="Drug-mediated inhibition of CDK4/CDK6 activity"/>
</dbReference>
<dbReference type="SignaLink" id="Q00534"/>
<dbReference type="SIGNOR" id="Q00534"/>
<dbReference type="BioGRID-ORCS" id="1021">
    <property type="hits" value="361 hits in 1221 CRISPR screens"/>
</dbReference>
<dbReference type="ChiTaRS" id="CDK6">
    <property type="organism name" value="human"/>
</dbReference>
<dbReference type="EvolutionaryTrace" id="Q00534"/>
<dbReference type="GeneWiki" id="Cyclin-dependent_kinase_6"/>
<dbReference type="GenomeRNAi" id="1021"/>
<dbReference type="Pharos" id="Q00534">
    <property type="development level" value="Tclin"/>
</dbReference>
<dbReference type="PRO" id="PR:Q00534"/>
<dbReference type="Proteomes" id="UP000005640">
    <property type="component" value="Chromosome 7"/>
</dbReference>
<dbReference type="RNAct" id="Q00534">
    <property type="molecule type" value="protein"/>
</dbReference>
<dbReference type="Bgee" id="ENSG00000105810">
    <property type="expression patterns" value="Expressed in adrenal tissue and 184 other cell types or tissues"/>
</dbReference>
<dbReference type="GO" id="GO:0005813">
    <property type="term" value="C:centrosome"/>
    <property type="evidence" value="ECO:0000314"/>
    <property type="project" value="UniProtKB"/>
</dbReference>
<dbReference type="GO" id="GO:0097131">
    <property type="term" value="C:cyclin D1-CDK6 complex"/>
    <property type="evidence" value="ECO:0000353"/>
    <property type="project" value="ComplexPortal"/>
</dbReference>
<dbReference type="GO" id="GO:0097132">
    <property type="term" value="C:cyclin D2-CDK6 complex"/>
    <property type="evidence" value="ECO:0007669"/>
    <property type="project" value="Ensembl"/>
</dbReference>
<dbReference type="GO" id="GO:0097133">
    <property type="term" value="C:cyclin D3-CDK6 complex"/>
    <property type="evidence" value="ECO:0000353"/>
    <property type="project" value="ComplexPortal"/>
</dbReference>
<dbReference type="GO" id="GO:0000307">
    <property type="term" value="C:cyclin-dependent protein kinase holoenzyme complex"/>
    <property type="evidence" value="ECO:0000314"/>
    <property type="project" value="BHF-UCL"/>
</dbReference>
<dbReference type="GO" id="GO:0005737">
    <property type="term" value="C:cytoplasm"/>
    <property type="evidence" value="ECO:0000314"/>
    <property type="project" value="BHF-UCL"/>
</dbReference>
<dbReference type="GO" id="GO:0005829">
    <property type="term" value="C:cytosol"/>
    <property type="evidence" value="ECO:0000314"/>
    <property type="project" value="HPA"/>
</dbReference>
<dbReference type="GO" id="GO:0005654">
    <property type="term" value="C:nucleoplasm"/>
    <property type="evidence" value="ECO:0000314"/>
    <property type="project" value="HPA"/>
</dbReference>
<dbReference type="GO" id="GO:0005634">
    <property type="term" value="C:nucleus"/>
    <property type="evidence" value="ECO:0000314"/>
    <property type="project" value="BHF-UCL"/>
</dbReference>
<dbReference type="GO" id="GO:0001726">
    <property type="term" value="C:ruffle"/>
    <property type="evidence" value="ECO:0000314"/>
    <property type="project" value="BHF-UCL"/>
</dbReference>
<dbReference type="GO" id="GO:0005524">
    <property type="term" value="F:ATP binding"/>
    <property type="evidence" value="ECO:0000314"/>
    <property type="project" value="BHF-UCL"/>
</dbReference>
<dbReference type="GO" id="GO:0030332">
    <property type="term" value="F:cyclin binding"/>
    <property type="evidence" value="ECO:0000353"/>
    <property type="project" value="BHF-UCL"/>
</dbReference>
<dbReference type="GO" id="GO:0004693">
    <property type="term" value="F:cyclin-dependent protein serine/threonine kinase activity"/>
    <property type="evidence" value="ECO:0000314"/>
    <property type="project" value="BHF-UCL"/>
</dbReference>
<dbReference type="GO" id="GO:0098770">
    <property type="term" value="F:FBXO family protein binding"/>
    <property type="evidence" value="ECO:0000353"/>
    <property type="project" value="ParkinsonsUK-UCL"/>
</dbReference>
<dbReference type="GO" id="GO:0106310">
    <property type="term" value="F:protein serine kinase activity"/>
    <property type="evidence" value="ECO:0007669"/>
    <property type="project" value="RHEA"/>
</dbReference>
<dbReference type="GO" id="GO:0014002">
    <property type="term" value="P:astrocyte development"/>
    <property type="evidence" value="ECO:0000250"/>
    <property type="project" value="UniProtKB"/>
</dbReference>
<dbReference type="GO" id="GO:0043697">
    <property type="term" value="P:cell dedifferentiation"/>
    <property type="evidence" value="ECO:0000315"/>
    <property type="project" value="BHF-UCL"/>
</dbReference>
<dbReference type="GO" id="GO:0051301">
    <property type="term" value="P:cell division"/>
    <property type="evidence" value="ECO:0007669"/>
    <property type="project" value="UniProtKB-KW"/>
</dbReference>
<dbReference type="GO" id="GO:0021542">
    <property type="term" value="P:dentate gyrus development"/>
    <property type="evidence" value="ECO:0000250"/>
    <property type="project" value="UniProtKB"/>
</dbReference>
<dbReference type="GO" id="GO:0006974">
    <property type="term" value="P:DNA damage response"/>
    <property type="evidence" value="ECO:0007669"/>
    <property type="project" value="Ensembl"/>
</dbReference>
<dbReference type="GO" id="GO:0000082">
    <property type="term" value="P:G1/S transition of mitotic cell cycle"/>
    <property type="evidence" value="ECO:0000314"/>
    <property type="project" value="UniProt"/>
</dbReference>
<dbReference type="GO" id="GO:0048699">
    <property type="term" value="P:generation of neurons"/>
    <property type="evidence" value="ECO:0000250"/>
    <property type="project" value="UniProtKB"/>
</dbReference>
<dbReference type="GO" id="GO:0042063">
    <property type="term" value="P:gliogenesis"/>
    <property type="evidence" value="ECO:0000315"/>
    <property type="project" value="BHF-UCL"/>
</dbReference>
<dbReference type="GO" id="GO:0060218">
    <property type="term" value="P:hematopoietic stem cell differentiation"/>
    <property type="evidence" value="ECO:0007669"/>
    <property type="project" value="Ensembl"/>
</dbReference>
<dbReference type="GO" id="GO:0021670">
    <property type="term" value="P:lateral ventricle development"/>
    <property type="evidence" value="ECO:0000250"/>
    <property type="project" value="UniProtKB"/>
</dbReference>
<dbReference type="GO" id="GO:0045786">
    <property type="term" value="P:negative regulation of cell cycle"/>
    <property type="evidence" value="ECO:0000314"/>
    <property type="project" value="UniProtKB"/>
</dbReference>
<dbReference type="GO" id="GO:0045596">
    <property type="term" value="P:negative regulation of cell differentiation"/>
    <property type="evidence" value="ECO:0000304"/>
    <property type="project" value="UniProtKB"/>
</dbReference>
<dbReference type="GO" id="GO:0008285">
    <property type="term" value="P:negative regulation of cell population proliferation"/>
    <property type="evidence" value="ECO:0000304"/>
    <property type="project" value="UniProtKB"/>
</dbReference>
<dbReference type="GO" id="GO:2000773">
    <property type="term" value="P:negative regulation of cellular senescence"/>
    <property type="evidence" value="ECO:0000314"/>
    <property type="project" value="UniProtKB"/>
</dbReference>
<dbReference type="GO" id="GO:0050680">
    <property type="term" value="P:negative regulation of epithelial cell proliferation"/>
    <property type="evidence" value="ECO:0000315"/>
    <property type="project" value="BHF-UCL"/>
</dbReference>
<dbReference type="GO" id="GO:0045656">
    <property type="term" value="P:negative regulation of monocyte differentiation"/>
    <property type="evidence" value="ECO:0000314"/>
    <property type="project" value="UniProtKB"/>
</dbReference>
<dbReference type="GO" id="GO:0045638">
    <property type="term" value="P:negative regulation of myeloid cell differentiation"/>
    <property type="evidence" value="ECO:0000314"/>
    <property type="project" value="UniProtKB"/>
</dbReference>
<dbReference type="GO" id="GO:0045668">
    <property type="term" value="P:negative regulation of osteoblast differentiation"/>
    <property type="evidence" value="ECO:0000314"/>
    <property type="project" value="BHF-UCL"/>
</dbReference>
<dbReference type="GO" id="GO:0000122">
    <property type="term" value="P:negative regulation of transcription by RNA polymerase II"/>
    <property type="evidence" value="ECO:0007669"/>
    <property type="project" value="Ensembl"/>
</dbReference>
<dbReference type="GO" id="GO:0007219">
    <property type="term" value="P:Notch signaling pathway"/>
    <property type="evidence" value="ECO:0007669"/>
    <property type="project" value="Ensembl"/>
</dbReference>
<dbReference type="GO" id="GO:0001954">
    <property type="term" value="P:positive regulation of cell-matrix adhesion"/>
    <property type="evidence" value="ECO:0000314"/>
    <property type="project" value="BHF-UCL"/>
</dbReference>
<dbReference type="GO" id="GO:0048146">
    <property type="term" value="P:positive regulation of fibroblast proliferation"/>
    <property type="evidence" value="ECO:0000315"/>
    <property type="project" value="BHF-UCL"/>
</dbReference>
<dbReference type="GO" id="GO:0010628">
    <property type="term" value="P:positive regulation of gene expression"/>
    <property type="evidence" value="ECO:0007669"/>
    <property type="project" value="Ensembl"/>
</dbReference>
<dbReference type="GO" id="GO:0051726">
    <property type="term" value="P:regulation of cell cycle"/>
    <property type="evidence" value="ECO:0000304"/>
    <property type="project" value="UniProtKB"/>
</dbReference>
<dbReference type="GO" id="GO:2000145">
    <property type="term" value="P:regulation of cell motility"/>
    <property type="evidence" value="ECO:0000250"/>
    <property type="project" value="UniProtKB"/>
</dbReference>
<dbReference type="GO" id="GO:0045646">
    <property type="term" value="P:regulation of erythrocyte differentiation"/>
    <property type="evidence" value="ECO:0000315"/>
    <property type="project" value="BHF-UCL"/>
</dbReference>
<dbReference type="GO" id="GO:0010389">
    <property type="term" value="P:regulation of G2/M transition of mitotic cell cycle"/>
    <property type="evidence" value="ECO:0000318"/>
    <property type="project" value="GO_Central"/>
</dbReference>
<dbReference type="GO" id="GO:0010468">
    <property type="term" value="P:regulation of gene expression"/>
    <property type="evidence" value="ECO:0000314"/>
    <property type="project" value="BHF-UCL"/>
</dbReference>
<dbReference type="GO" id="GO:1902036">
    <property type="term" value="P:regulation of hematopoietic stem cell differentiation"/>
    <property type="evidence" value="ECO:0007669"/>
    <property type="project" value="Ensembl"/>
</dbReference>
<dbReference type="GO" id="GO:0009615">
    <property type="term" value="P:response to virus"/>
    <property type="evidence" value="ECO:0000270"/>
    <property type="project" value="UniProtKB"/>
</dbReference>
<dbReference type="GO" id="GO:0007165">
    <property type="term" value="P:signal transduction"/>
    <property type="evidence" value="ECO:0000318"/>
    <property type="project" value="GO_Central"/>
</dbReference>
<dbReference type="GO" id="GO:0033077">
    <property type="term" value="P:T cell differentiation in thymus"/>
    <property type="evidence" value="ECO:0007669"/>
    <property type="project" value="Ensembl"/>
</dbReference>
<dbReference type="GO" id="GO:0003323">
    <property type="term" value="P:type B pancreatic cell development"/>
    <property type="evidence" value="ECO:0000314"/>
    <property type="project" value="UniProtKB"/>
</dbReference>
<dbReference type="CDD" id="cd07862">
    <property type="entry name" value="STKc_CDK6"/>
    <property type="match status" value="1"/>
</dbReference>
<dbReference type="FunFam" id="3.30.200.20:FF:000124">
    <property type="entry name" value="Cyclin-dependent kinase 4"/>
    <property type="match status" value="1"/>
</dbReference>
<dbReference type="FunFam" id="1.10.510.10:FF:000205">
    <property type="entry name" value="Cyclin-dependent kinase 6"/>
    <property type="match status" value="1"/>
</dbReference>
<dbReference type="Gene3D" id="3.30.200.20">
    <property type="entry name" value="Phosphorylase Kinase, domain 1"/>
    <property type="match status" value="1"/>
</dbReference>
<dbReference type="Gene3D" id="1.10.510.10">
    <property type="entry name" value="Transferase(Phosphotransferase) domain 1"/>
    <property type="match status" value="1"/>
</dbReference>
<dbReference type="InterPro" id="IPR050108">
    <property type="entry name" value="CDK"/>
</dbReference>
<dbReference type="InterPro" id="IPR028788">
    <property type="entry name" value="CDK6"/>
</dbReference>
<dbReference type="InterPro" id="IPR011009">
    <property type="entry name" value="Kinase-like_dom_sf"/>
</dbReference>
<dbReference type="InterPro" id="IPR000719">
    <property type="entry name" value="Prot_kinase_dom"/>
</dbReference>
<dbReference type="InterPro" id="IPR017441">
    <property type="entry name" value="Protein_kinase_ATP_BS"/>
</dbReference>
<dbReference type="InterPro" id="IPR008271">
    <property type="entry name" value="Ser/Thr_kinase_AS"/>
</dbReference>
<dbReference type="PANTHER" id="PTHR24056">
    <property type="entry name" value="CELL DIVISION PROTEIN KINASE"/>
    <property type="match status" value="1"/>
</dbReference>
<dbReference type="PANTHER" id="PTHR24056:SF130">
    <property type="entry name" value="CYCLIN-DEPENDENT KINASE 6"/>
    <property type="match status" value="1"/>
</dbReference>
<dbReference type="Pfam" id="PF00069">
    <property type="entry name" value="Pkinase"/>
    <property type="match status" value="1"/>
</dbReference>
<dbReference type="SMART" id="SM00220">
    <property type="entry name" value="S_TKc"/>
    <property type="match status" value="1"/>
</dbReference>
<dbReference type="SUPFAM" id="SSF56112">
    <property type="entry name" value="Protein kinase-like (PK-like)"/>
    <property type="match status" value="1"/>
</dbReference>
<dbReference type="PROSITE" id="PS00107">
    <property type="entry name" value="PROTEIN_KINASE_ATP"/>
    <property type="match status" value="1"/>
</dbReference>
<dbReference type="PROSITE" id="PS50011">
    <property type="entry name" value="PROTEIN_KINASE_DOM"/>
    <property type="match status" value="1"/>
</dbReference>
<dbReference type="PROSITE" id="PS00108">
    <property type="entry name" value="PROTEIN_KINASE_ST"/>
    <property type="match status" value="1"/>
</dbReference>
<evidence type="ECO:0000250" key="1"/>
<evidence type="ECO:0000250" key="2">
    <source>
        <dbReference type="UniProtKB" id="Q64261"/>
    </source>
</evidence>
<evidence type="ECO:0000255" key="3">
    <source>
        <dbReference type="PROSITE-ProRule" id="PRU00159"/>
    </source>
</evidence>
<evidence type="ECO:0000269" key="4">
    <source>
    </source>
</evidence>
<evidence type="ECO:0000269" key="5">
    <source>
    </source>
</evidence>
<evidence type="ECO:0000269" key="6">
    <source>
    </source>
</evidence>
<evidence type="ECO:0000269" key="7">
    <source>
    </source>
</evidence>
<evidence type="ECO:0000269" key="8">
    <source>
    </source>
</evidence>
<evidence type="ECO:0000269" key="9">
    <source>
    </source>
</evidence>
<evidence type="ECO:0000269" key="10">
    <source>
    </source>
</evidence>
<evidence type="ECO:0000269" key="11">
    <source>
    </source>
</evidence>
<evidence type="ECO:0000269" key="12">
    <source>
    </source>
</evidence>
<evidence type="ECO:0000269" key="13">
    <source>
    </source>
</evidence>
<evidence type="ECO:0000269" key="14">
    <source>
    </source>
</evidence>
<evidence type="ECO:0000269" key="15">
    <source>
    </source>
</evidence>
<evidence type="ECO:0000269" key="16">
    <source>
    </source>
</evidence>
<evidence type="ECO:0000269" key="17">
    <source>
    </source>
</evidence>
<evidence type="ECO:0000269" key="18">
    <source>
    </source>
</evidence>
<evidence type="ECO:0000269" key="19">
    <source>
    </source>
</evidence>
<evidence type="ECO:0000269" key="20">
    <source>
    </source>
</evidence>
<evidence type="ECO:0000269" key="21">
    <source>
    </source>
</evidence>
<evidence type="ECO:0000269" key="22">
    <source>
    </source>
</evidence>
<evidence type="ECO:0000269" key="23">
    <source>
    </source>
</evidence>
<evidence type="ECO:0000305" key="24"/>
<evidence type="ECO:0007744" key="25">
    <source>
    </source>
</evidence>
<evidence type="ECO:0007744" key="26">
    <source>
    </source>
</evidence>
<evidence type="ECO:0007744" key="27">
    <source>
    </source>
</evidence>
<evidence type="ECO:0007744" key="28">
    <source>
    </source>
</evidence>
<evidence type="ECO:0007829" key="29">
    <source>
        <dbReference type="PDB" id="1BI8"/>
    </source>
</evidence>
<evidence type="ECO:0007829" key="30">
    <source>
        <dbReference type="PDB" id="1BLX"/>
    </source>
</evidence>
<evidence type="ECO:0007829" key="31">
    <source>
        <dbReference type="PDB" id="1XO2"/>
    </source>
</evidence>
<evidence type="ECO:0007829" key="32">
    <source>
        <dbReference type="PDB" id="2F2C"/>
    </source>
</evidence>
<evidence type="ECO:0007829" key="33">
    <source>
        <dbReference type="PDB" id="4TTH"/>
    </source>
</evidence>
<evidence type="ECO:0007829" key="34">
    <source>
        <dbReference type="PDB" id="6OQO"/>
    </source>
</evidence>
<reference key="1">
    <citation type="journal article" date="1992" name="EMBO J.">
        <title>A family of human cdc2-related protein kinases.</title>
        <authorList>
            <person name="Meyerson M."/>
            <person name="Enders G.H."/>
            <person name="Wu C.-L."/>
            <person name="Su L.-K."/>
            <person name="Gorka C."/>
            <person name="Nelson C."/>
            <person name="Harlow E."/>
            <person name="Tsai L.-H."/>
        </authorList>
    </citation>
    <scope>NUCLEOTIDE SEQUENCE [MRNA]</scope>
</reference>
<reference key="2">
    <citation type="submission" date="2002-07" db="EMBL/GenBank/DDBJ databases">
        <authorList>
            <consortium name="NIEHS SNPs program"/>
        </authorList>
    </citation>
    <scope>NUCLEOTIDE SEQUENCE [GENOMIC DNA]</scope>
</reference>
<reference key="3">
    <citation type="journal article" date="2004" name="Nat. Genet.">
        <title>Complete sequencing and characterization of 21,243 full-length human cDNAs.</title>
        <authorList>
            <person name="Ota T."/>
            <person name="Suzuki Y."/>
            <person name="Nishikawa T."/>
            <person name="Otsuki T."/>
            <person name="Sugiyama T."/>
            <person name="Irie R."/>
            <person name="Wakamatsu A."/>
            <person name="Hayashi K."/>
            <person name="Sato H."/>
            <person name="Nagai K."/>
            <person name="Kimura K."/>
            <person name="Makita H."/>
            <person name="Sekine M."/>
            <person name="Obayashi M."/>
            <person name="Nishi T."/>
            <person name="Shibahara T."/>
            <person name="Tanaka T."/>
            <person name="Ishii S."/>
            <person name="Yamamoto J."/>
            <person name="Saito K."/>
            <person name="Kawai Y."/>
            <person name="Isono Y."/>
            <person name="Nakamura Y."/>
            <person name="Nagahari K."/>
            <person name="Murakami K."/>
            <person name="Yasuda T."/>
            <person name="Iwayanagi T."/>
            <person name="Wagatsuma M."/>
            <person name="Shiratori A."/>
            <person name="Sudo H."/>
            <person name="Hosoiri T."/>
            <person name="Kaku Y."/>
            <person name="Kodaira H."/>
            <person name="Kondo H."/>
            <person name="Sugawara M."/>
            <person name="Takahashi M."/>
            <person name="Kanda K."/>
            <person name="Yokoi T."/>
            <person name="Furuya T."/>
            <person name="Kikkawa E."/>
            <person name="Omura Y."/>
            <person name="Abe K."/>
            <person name="Kamihara K."/>
            <person name="Katsuta N."/>
            <person name="Sato K."/>
            <person name="Tanikawa M."/>
            <person name="Yamazaki M."/>
            <person name="Ninomiya K."/>
            <person name="Ishibashi T."/>
            <person name="Yamashita H."/>
            <person name="Murakawa K."/>
            <person name="Fujimori K."/>
            <person name="Tanai H."/>
            <person name="Kimata M."/>
            <person name="Watanabe M."/>
            <person name="Hiraoka S."/>
            <person name="Chiba Y."/>
            <person name="Ishida S."/>
            <person name="Ono Y."/>
            <person name="Takiguchi S."/>
            <person name="Watanabe S."/>
            <person name="Yosida M."/>
            <person name="Hotuta T."/>
            <person name="Kusano J."/>
            <person name="Kanehori K."/>
            <person name="Takahashi-Fujii A."/>
            <person name="Hara H."/>
            <person name="Tanase T.-O."/>
            <person name="Nomura Y."/>
            <person name="Togiya S."/>
            <person name="Komai F."/>
            <person name="Hara R."/>
            <person name="Takeuchi K."/>
            <person name="Arita M."/>
            <person name="Imose N."/>
            <person name="Musashino K."/>
            <person name="Yuuki H."/>
            <person name="Oshima A."/>
            <person name="Sasaki N."/>
            <person name="Aotsuka S."/>
            <person name="Yoshikawa Y."/>
            <person name="Matsunawa H."/>
            <person name="Ichihara T."/>
            <person name="Shiohata N."/>
            <person name="Sano S."/>
            <person name="Moriya S."/>
            <person name="Momiyama H."/>
            <person name="Satoh N."/>
            <person name="Takami S."/>
            <person name="Terashima Y."/>
            <person name="Suzuki O."/>
            <person name="Nakagawa S."/>
            <person name="Senoh A."/>
            <person name="Mizoguchi H."/>
            <person name="Goto Y."/>
            <person name="Shimizu F."/>
            <person name="Wakebe H."/>
            <person name="Hishigaki H."/>
            <person name="Watanabe T."/>
            <person name="Sugiyama A."/>
            <person name="Takemoto M."/>
            <person name="Kawakami B."/>
            <person name="Yamazaki M."/>
            <person name="Watanabe K."/>
            <person name="Kumagai A."/>
            <person name="Itakura S."/>
            <person name="Fukuzumi Y."/>
            <person name="Fujimori Y."/>
            <person name="Komiyama M."/>
            <person name="Tashiro H."/>
            <person name="Tanigami A."/>
            <person name="Fujiwara T."/>
            <person name="Ono T."/>
            <person name="Yamada K."/>
            <person name="Fujii Y."/>
            <person name="Ozaki K."/>
            <person name="Hirao M."/>
            <person name="Ohmori Y."/>
            <person name="Kawabata A."/>
            <person name="Hikiji T."/>
            <person name="Kobatake N."/>
            <person name="Inagaki H."/>
            <person name="Ikema Y."/>
            <person name="Okamoto S."/>
            <person name="Okitani R."/>
            <person name="Kawakami T."/>
            <person name="Noguchi S."/>
            <person name="Itoh T."/>
            <person name="Shigeta K."/>
            <person name="Senba T."/>
            <person name="Matsumura K."/>
            <person name="Nakajima Y."/>
            <person name="Mizuno T."/>
            <person name="Morinaga M."/>
            <person name="Sasaki M."/>
            <person name="Togashi T."/>
            <person name="Oyama M."/>
            <person name="Hata H."/>
            <person name="Watanabe M."/>
            <person name="Komatsu T."/>
            <person name="Mizushima-Sugano J."/>
            <person name="Satoh T."/>
            <person name="Shirai Y."/>
            <person name="Takahashi Y."/>
            <person name="Nakagawa K."/>
            <person name="Okumura K."/>
            <person name="Nagase T."/>
            <person name="Nomura N."/>
            <person name="Kikuchi H."/>
            <person name="Masuho Y."/>
            <person name="Yamashita R."/>
            <person name="Nakai K."/>
            <person name="Yada T."/>
            <person name="Nakamura Y."/>
            <person name="Ohara O."/>
            <person name="Isogai T."/>
            <person name="Sugano S."/>
        </authorList>
    </citation>
    <scope>NUCLEOTIDE SEQUENCE [LARGE SCALE MRNA]</scope>
    <source>
        <tissue>Tongue</tissue>
    </source>
</reference>
<reference key="4">
    <citation type="journal article" date="2003" name="Nature">
        <title>The DNA sequence of human chromosome 7.</title>
        <authorList>
            <person name="Hillier L.W."/>
            <person name="Fulton R.S."/>
            <person name="Fulton L.A."/>
            <person name="Graves T.A."/>
            <person name="Pepin K.H."/>
            <person name="Wagner-McPherson C."/>
            <person name="Layman D."/>
            <person name="Maas J."/>
            <person name="Jaeger S."/>
            <person name="Walker R."/>
            <person name="Wylie K."/>
            <person name="Sekhon M."/>
            <person name="Becker M.C."/>
            <person name="O'Laughlin M.D."/>
            <person name="Schaller M.E."/>
            <person name="Fewell G.A."/>
            <person name="Delehaunty K.D."/>
            <person name="Miner T.L."/>
            <person name="Nash W.E."/>
            <person name="Cordes M."/>
            <person name="Du H."/>
            <person name="Sun H."/>
            <person name="Edwards J."/>
            <person name="Bradshaw-Cordum H."/>
            <person name="Ali J."/>
            <person name="Andrews S."/>
            <person name="Isak A."/>
            <person name="Vanbrunt A."/>
            <person name="Nguyen C."/>
            <person name="Du F."/>
            <person name="Lamar B."/>
            <person name="Courtney L."/>
            <person name="Kalicki J."/>
            <person name="Ozersky P."/>
            <person name="Bielicki L."/>
            <person name="Scott K."/>
            <person name="Holmes A."/>
            <person name="Harkins R."/>
            <person name="Harris A."/>
            <person name="Strong C.M."/>
            <person name="Hou S."/>
            <person name="Tomlinson C."/>
            <person name="Dauphin-Kohlberg S."/>
            <person name="Kozlowicz-Reilly A."/>
            <person name="Leonard S."/>
            <person name="Rohlfing T."/>
            <person name="Rock S.M."/>
            <person name="Tin-Wollam A.-M."/>
            <person name="Abbott A."/>
            <person name="Minx P."/>
            <person name="Maupin R."/>
            <person name="Strowmatt C."/>
            <person name="Latreille P."/>
            <person name="Miller N."/>
            <person name="Johnson D."/>
            <person name="Murray J."/>
            <person name="Woessner J.P."/>
            <person name="Wendl M.C."/>
            <person name="Yang S.-P."/>
            <person name="Schultz B.R."/>
            <person name="Wallis J.W."/>
            <person name="Spieth J."/>
            <person name="Bieri T.A."/>
            <person name="Nelson J.O."/>
            <person name="Berkowicz N."/>
            <person name="Wohldmann P.E."/>
            <person name="Cook L.L."/>
            <person name="Hickenbotham M.T."/>
            <person name="Eldred J."/>
            <person name="Williams D."/>
            <person name="Bedell J.A."/>
            <person name="Mardis E.R."/>
            <person name="Clifton S.W."/>
            <person name="Chissoe S.L."/>
            <person name="Marra M.A."/>
            <person name="Raymond C."/>
            <person name="Haugen E."/>
            <person name="Gillett W."/>
            <person name="Zhou Y."/>
            <person name="James R."/>
            <person name="Phelps K."/>
            <person name="Iadanoto S."/>
            <person name="Bubb K."/>
            <person name="Simms E."/>
            <person name="Levy R."/>
            <person name="Clendenning J."/>
            <person name="Kaul R."/>
            <person name="Kent W.J."/>
            <person name="Furey T.S."/>
            <person name="Baertsch R.A."/>
            <person name="Brent M.R."/>
            <person name="Keibler E."/>
            <person name="Flicek P."/>
            <person name="Bork P."/>
            <person name="Suyama M."/>
            <person name="Bailey J.A."/>
            <person name="Portnoy M.E."/>
            <person name="Torrents D."/>
            <person name="Chinwalla A.T."/>
            <person name="Gish W.R."/>
            <person name="Eddy S.R."/>
            <person name="McPherson J.D."/>
            <person name="Olson M.V."/>
            <person name="Eichler E.E."/>
            <person name="Green E.D."/>
            <person name="Waterston R.H."/>
            <person name="Wilson R.K."/>
        </authorList>
    </citation>
    <scope>NUCLEOTIDE SEQUENCE [LARGE SCALE GENOMIC DNA]</scope>
</reference>
<reference key="5">
    <citation type="journal article" date="2003" name="Science">
        <title>Human chromosome 7: DNA sequence and biology.</title>
        <authorList>
            <person name="Scherer S.W."/>
            <person name="Cheung J."/>
            <person name="MacDonald J.R."/>
            <person name="Osborne L.R."/>
            <person name="Nakabayashi K."/>
            <person name="Herbrick J.-A."/>
            <person name="Carson A.R."/>
            <person name="Parker-Katiraee L."/>
            <person name="Skaug J."/>
            <person name="Khaja R."/>
            <person name="Zhang J."/>
            <person name="Hudek A.K."/>
            <person name="Li M."/>
            <person name="Haddad M."/>
            <person name="Duggan G.E."/>
            <person name="Fernandez B.A."/>
            <person name="Kanematsu E."/>
            <person name="Gentles S."/>
            <person name="Christopoulos C.C."/>
            <person name="Choufani S."/>
            <person name="Kwasnicka D."/>
            <person name="Zheng X.H."/>
            <person name="Lai Z."/>
            <person name="Nusskern D.R."/>
            <person name="Zhang Q."/>
            <person name="Gu Z."/>
            <person name="Lu F."/>
            <person name="Zeesman S."/>
            <person name="Nowaczyk M.J."/>
            <person name="Teshima I."/>
            <person name="Chitayat D."/>
            <person name="Shuman C."/>
            <person name="Weksberg R."/>
            <person name="Zackai E.H."/>
            <person name="Grebe T.A."/>
            <person name="Cox S.R."/>
            <person name="Kirkpatrick S.J."/>
            <person name="Rahman N."/>
            <person name="Friedman J.M."/>
            <person name="Heng H.H.Q."/>
            <person name="Pelicci P.G."/>
            <person name="Lo-Coco F."/>
            <person name="Belloni E."/>
            <person name="Shaffer L.G."/>
            <person name="Pober B."/>
            <person name="Morton C.C."/>
            <person name="Gusella J.F."/>
            <person name="Bruns G.A.P."/>
            <person name="Korf B.R."/>
            <person name="Quade B.J."/>
            <person name="Ligon A.H."/>
            <person name="Ferguson H."/>
            <person name="Higgins A.W."/>
            <person name="Leach N.T."/>
            <person name="Herrick S.R."/>
            <person name="Lemyre E."/>
            <person name="Farra C.G."/>
            <person name="Kim H.-G."/>
            <person name="Summers A.M."/>
            <person name="Gripp K.W."/>
            <person name="Roberts W."/>
            <person name="Szatmari P."/>
            <person name="Winsor E.J.T."/>
            <person name="Grzeschik K.-H."/>
            <person name="Teebi A."/>
            <person name="Minassian B.A."/>
            <person name="Kere J."/>
            <person name="Armengol L."/>
            <person name="Pujana M.A."/>
            <person name="Estivill X."/>
            <person name="Wilson M.D."/>
            <person name="Koop B.F."/>
            <person name="Tosi S."/>
            <person name="Moore G.E."/>
            <person name="Boright A.P."/>
            <person name="Zlotorynski E."/>
            <person name="Kerem B."/>
            <person name="Kroisel P.M."/>
            <person name="Petek E."/>
            <person name="Oscier D.G."/>
            <person name="Mould S.J."/>
            <person name="Doehner H."/>
            <person name="Doehner K."/>
            <person name="Rommens J.M."/>
            <person name="Vincent J.B."/>
            <person name="Venter J.C."/>
            <person name="Li P.W."/>
            <person name="Mural R.J."/>
            <person name="Adams M.D."/>
            <person name="Tsui L.-C."/>
        </authorList>
    </citation>
    <scope>NUCLEOTIDE SEQUENCE [LARGE SCALE GENOMIC DNA]</scope>
</reference>
<reference key="6">
    <citation type="submission" date="2005-09" db="EMBL/GenBank/DDBJ databases">
        <authorList>
            <person name="Mural R.J."/>
            <person name="Istrail S."/>
            <person name="Sutton G.G."/>
            <person name="Florea L."/>
            <person name="Halpern A.L."/>
            <person name="Mobarry C.M."/>
            <person name="Lippert R."/>
            <person name="Walenz B."/>
            <person name="Shatkay H."/>
            <person name="Dew I."/>
            <person name="Miller J.R."/>
            <person name="Flanigan M.J."/>
            <person name="Edwards N.J."/>
            <person name="Bolanos R."/>
            <person name="Fasulo D."/>
            <person name="Halldorsson B.V."/>
            <person name="Hannenhalli S."/>
            <person name="Turner R."/>
            <person name="Yooseph S."/>
            <person name="Lu F."/>
            <person name="Nusskern D.R."/>
            <person name="Shue B.C."/>
            <person name="Zheng X.H."/>
            <person name="Zhong F."/>
            <person name="Delcher A.L."/>
            <person name="Huson D.H."/>
            <person name="Kravitz S.A."/>
            <person name="Mouchard L."/>
            <person name="Reinert K."/>
            <person name="Remington K.A."/>
            <person name="Clark A.G."/>
            <person name="Waterman M.S."/>
            <person name="Eichler E.E."/>
            <person name="Adams M.D."/>
            <person name="Hunkapiller M.W."/>
            <person name="Myers E.W."/>
            <person name="Venter J.C."/>
        </authorList>
    </citation>
    <scope>NUCLEOTIDE SEQUENCE [LARGE SCALE GENOMIC DNA]</scope>
</reference>
<reference key="7">
    <citation type="journal article" date="2004" name="Genome Res.">
        <title>The status, quality, and expansion of the NIH full-length cDNA project: the Mammalian Gene Collection (MGC).</title>
        <authorList>
            <consortium name="The MGC Project Team"/>
        </authorList>
    </citation>
    <scope>NUCLEOTIDE SEQUENCE [LARGE SCALE MRNA]</scope>
    <source>
        <tissue>Brain</tissue>
    </source>
</reference>
<reference key="8">
    <citation type="journal article" date="1994" name="Mol. Cell. Biol.">
        <title>Identification of G1 kinase activity for cdk6, a novel cyclin D partner.</title>
        <authorList>
            <person name="Meyerson M."/>
            <person name="Harlow E."/>
        </authorList>
    </citation>
    <scope>FUNCTION AS PRB/RB1 KINASE</scope>
    <scope>TISSUE SPECIFICITY</scope>
    <scope>INTERACTION WITH D-TYPE CYCLINS</scope>
</reference>
<reference key="9">
    <citation type="journal article" date="1998" name="Oncogene">
        <title>Active cdk6 complexes are predominantly nuclear and represent only a minority of the cdk6 in T cells.</title>
        <authorList>
            <person name="Mahony D."/>
            <person name="Parry D.A."/>
            <person name="Lees E."/>
        </authorList>
    </citation>
    <scope>SUBCELLULAR LOCATION</scope>
    <scope>INTERACTION WITH D-TYPE CYCLINS; CDKN2D; HSP90AB1 AND CDC37</scope>
</reference>
<reference key="10">
    <citation type="journal article" date="2003" name="Oncogene">
        <title>CDK6 blocks differentiation: coupling cell proliferation to the block to differentiation in leukemic cells.</title>
        <authorList>
            <person name="Matushansky I."/>
            <person name="Radparvar F."/>
            <person name="Skoultchi A.I."/>
        </authorList>
    </citation>
    <scope>FUNCTION IN DIFFERENTIATION</scope>
    <scope>ACTIVITY REGULATION</scope>
</reference>
<reference key="11">
    <citation type="journal article" date="2004" name="Mol. Cancer Res.">
        <title>Cyclin-dependent kinase 6 inhibits proliferation of human mammary epithelial cells.</title>
        <authorList>
            <person name="Lucas J.J."/>
            <person name="Domenico J."/>
            <person name="Gelfand E.W."/>
        </authorList>
    </citation>
    <scope>FUNCTION IN CELL PROLIFERATION</scope>
</reference>
<reference key="12">
    <citation type="journal article" date="2004" name="Mol. Cell. Biol.">
        <title>Bone morphogenetic protein 2-induced osteoblast differentiation requires Smad-mediated down-regulation of Cdk6.</title>
        <authorList>
            <person name="Ogasawara T."/>
            <person name="Kawaguchi H."/>
            <person name="Jinno S."/>
            <person name="Hoshi K."/>
            <person name="Itaka K."/>
            <person name="Takato T."/>
            <person name="Nakamura K."/>
            <person name="Okayama H."/>
        </authorList>
    </citation>
    <scope>FUNCTION IN DIFFERENTIATION</scope>
</reference>
<reference key="13">
    <citation type="journal article" date="2005" name="EMBO J.">
        <title>Transforming activity of Fbxo7 is mediated specifically through regulation of cyclin D/cdk6.</title>
        <authorList>
            <person name="Laman H."/>
            <person name="Funes J.M."/>
            <person name="Ye H."/>
            <person name="Henderson S."/>
            <person name="Galinanes-Garcia L."/>
            <person name="Hara E."/>
            <person name="Knowles P."/>
            <person name="McDonald N."/>
            <person name="Boshoff C."/>
        </authorList>
    </citation>
    <scope>INTERACTION WITH FBXO7</scope>
    <scope>SUBCELLULAR LOCATION</scope>
</reference>
<reference key="14">
    <citation type="journal article" date="2005" name="J. Biochem.">
        <title>Preferences for phosphorylation sites in the retinoblastoma protein of D-type cyclin-dependent kinases, Cdk4 and Cdk6, in vitro.</title>
        <authorList>
            <person name="Takaki T."/>
            <person name="Fukasawa K."/>
            <person name="Suzuki-Takahashi I."/>
            <person name="Semba K."/>
            <person name="Kitagawa M."/>
            <person name="Taya Y."/>
            <person name="Hirai H."/>
        </authorList>
    </citation>
    <scope>FUNCTION AS PRB/RB1 KINASE</scope>
</reference>
<reference key="15">
    <citation type="journal article" date="2005" name="Nat. Biotechnol.">
        <title>Immunoaffinity profiling of tyrosine phosphorylation in cancer cells.</title>
        <authorList>
            <person name="Rush J."/>
            <person name="Moritz A."/>
            <person name="Lee K.A."/>
            <person name="Guo A."/>
            <person name="Goss V.L."/>
            <person name="Spek E.J."/>
            <person name="Zhang H."/>
            <person name="Zha X.-M."/>
            <person name="Polakiewicz R.D."/>
            <person name="Comb M.J."/>
        </authorList>
    </citation>
    <scope>PHOSPHORYLATION [LARGE SCALE ANALYSIS] AT TYR-13 AND TYR-24</scope>
    <scope>IDENTIFICATION BY MASS SPECTROMETRY [LARGE SCALE ANALYSIS]</scope>
</reference>
<reference key="16">
    <citation type="journal article" date="2006" name="Cell. Microbiol.">
        <title>Transcriptomic and proteomic analyses of rhabdomyosarcoma cells reveal differential cellular gene expression in response to enterovirus 71 infection.</title>
        <authorList>
            <person name="Leong W.F."/>
            <person name="Chow V.T."/>
        </authorList>
    </citation>
    <scope>INDUCTION</scope>
    <scope>IDENTIFICATION BY MASS SPECTROMETRY</scope>
</reference>
<reference key="17">
    <citation type="journal article" date="2007" name="EMBO J.">
        <title>Cdk6 blocks myeloid differentiation by interfering with Runx1 DNA binding and Runx1-C/EBPalpha interaction.</title>
        <authorList>
            <person name="Fujimoto T."/>
            <person name="Anderson K."/>
            <person name="Jacobsen S.E."/>
            <person name="Nishikawa S.I."/>
            <person name="Nerlov C."/>
        </authorList>
    </citation>
    <scope>FUNCTION IN MYELOID DIFFERENTIATION</scope>
    <scope>INTERACTION WITH RUNX1</scope>
</reference>
<reference key="18">
    <citation type="journal article" date="2007" name="Mol. Cell. Biol.">
        <title>CDK4 and CDK6 delay senescence by kinase-dependent and p16INK4a-independent mechanisms.</title>
        <authorList>
            <person name="Ruas M."/>
            <person name="Gregory F."/>
            <person name="Jones R."/>
            <person name="Poolman R."/>
            <person name="Starborg M."/>
            <person name="Rowe J."/>
            <person name="Brookes S."/>
            <person name="Peters G."/>
        </authorList>
    </citation>
    <scope>FUNCTION IN SENESCENCE</scope>
</reference>
<reference key="19">
    <citation type="journal article" date="2009" name="J. Cell Biol.">
        <title>A role for NANOG in G1 to S transition in human embryonic stem cells through direct binding of CDK6 and CDC25A.</title>
        <authorList>
            <person name="Zhang X."/>
            <person name="Neganova I."/>
            <person name="Przyborski S."/>
            <person name="Yang C."/>
            <person name="Cooke M."/>
            <person name="Atkinson S.P."/>
            <person name="Anyfantis G."/>
            <person name="Fenyk S."/>
            <person name="Keith W.N."/>
            <person name="Hoare S.F."/>
            <person name="Hughes O."/>
            <person name="Strachan T."/>
            <person name="Stojkovic M."/>
            <person name="Hinds P.W."/>
            <person name="Armstrong L."/>
            <person name="Lako M."/>
        </authorList>
    </citation>
    <scope>INDUCTION BY NANOG</scope>
</reference>
<reference key="20">
    <citation type="journal article" date="2009" name="Mol. Cell. Proteomics">
        <title>Large-scale proteomics analysis of the human kinome.</title>
        <authorList>
            <person name="Oppermann F.S."/>
            <person name="Gnad F."/>
            <person name="Olsen J.V."/>
            <person name="Hornberger R."/>
            <person name="Greff Z."/>
            <person name="Keri G."/>
            <person name="Mann M."/>
            <person name="Daub H."/>
        </authorList>
    </citation>
    <scope>PHOSPHORYLATION [LARGE SCALE ANALYSIS] AT TYR-24; THR-49; THR-70 AND THR-325</scope>
    <scope>IDENTIFICATION BY MASS SPECTROMETRY [LARGE SCALE ANALYSIS]</scope>
</reference>
<reference key="21">
    <citation type="journal article" date="2009" name="Sci. Signal.">
        <title>Quantitative phosphoproteomic analysis of T cell receptor signaling reveals system-wide modulation of protein-protein interactions.</title>
        <authorList>
            <person name="Mayya V."/>
            <person name="Lundgren D.H."/>
            <person name="Hwang S.-I."/>
            <person name="Rezaul K."/>
            <person name="Wu L."/>
            <person name="Eng J.K."/>
            <person name="Rodionov V."/>
            <person name="Han D.K."/>
        </authorList>
    </citation>
    <scope>IDENTIFICATION BY MASS SPECTROMETRY [LARGE SCALE ANALYSIS]</scope>
    <source>
        <tissue>Leukemic T-cell</tissue>
    </source>
</reference>
<reference key="22">
    <citation type="journal article" date="2009" name="Science">
        <title>Lysine acetylation targets protein complexes and co-regulates major cellular functions.</title>
        <authorList>
            <person name="Choudhary C."/>
            <person name="Kumar C."/>
            <person name="Gnad F."/>
            <person name="Nielsen M.L."/>
            <person name="Rehman M."/>
            <person name="Walther T.C."/>
            <person name="Olsen J.V."/>
            <person name="Mann M."/>
        </authorList>
    </citation>
    <scope>ACETYLATION [LARGE SCALE ANALYSIS] AT LYS-264</scope>
    <scope>IDENTIFICATION BY MASS SPECTROMETRY [LARGE SCALE ANALYSIS]</scope>
</reference>
<reference key="23">
    <citation type="journal article" date="2010" name="Diabetes">
        <title>Induction of human beta-cell proliferation and engraftment using a single G1/S regulatory molecule, cdk6.</title>
        <authorList>
            <person name="Fiaschi-Taesch N.M."/>
            <person name="Salim F."/>
            <person name="Kleinberger J."/>
            <person name="Troxell R."/>
            <person name="Cozar-Castellano I."/>
            <person name="Selk K."/>
            <person name="Cherok E."/>
            <person name="Takane K.K."/>
            <person name="Scott D.K."/>
            <person name="Stewart A.F."/>
        </authorList>
    </citation>
    <scope>FUNCTION IN BETA-CELL PROLIFERATION</scope>
    <scope>TISSUE SPECIFICITY</scope>
    <scope>SUBCELLULAR LOCATION</scope>
</reference>
<reference key="24">
    <citation type="journal article" date="2010" name="PLoS Pathog.">
        <title>Nucleophosmin phosphorylation by v-cyclin-CDK6 controls KSHV latency.</title>
        <authorList>
            <person name="Sarek G."/>
            <person name="Jaerviluoma A."/>
            <person name="Moore H.M."/>
            <person name="Tojkander S."/>
            <person name="Vartia S."/>
            <person name="Biberfeld P."/>
            <person name="Laiho M."/>
            <person name="Ojala P.M."/>
        </authorList>
    </citation>
    <scope>FUNCTION AS NPM1 KINASE</scope>
    <scope>INTERACTION WITH KSHV V-CYCLIN</scope>
</reference>
<reference key="25">
    <citation type="journal article" date="2006" name="J. Cell. Biochem.">
        <title>Beyond the cell cycle: a new role for Cdk6 in differentiation.</title>
        <authorList>
            <person name="Grossel M.J."/>
            <person name="Hinds P.W."/>
        </authorList>
    </citation>
    <scope>REVIEW ON CELL DIFFERENTIATION</scope>
</reference>
<reference key="26">
    <citation type="journal article" date="2009" name="Nat. Rev. Cancer">
        <title>Cell cycle, CDKs and cancer: a changing paradigm.</title>
        <authorList>
            <person name="Malumbres M."/>
            <person name="Barbacid M."/>
        </authorList>
    </citation>
    <scope>REVIEW ON CELL CYCLE CONTROL</scope>
    <scope>INHIBITORS</scope>
    <scope>GENE FAMILY</scope>
</reference>
<reference key="27">
    <citation type="journal article" date="2011" name="BMC Syst. Biol.">
        <title>Initial characterization of the human central proteome.</title>
        <authorList>
            <person name="Burkard T.R."/>
            <person name="Planyavsky M."/>
            <person name="Kaupe I."/>
            <person name="Breitwieser F.P."/>
            <person name="Buerckstuemmer T."/>
            <person name="Bennett K.L."/>
            <person name="Superti-Furga G."/>
            <person name="Colinge J."/>
        </authorList>
    </citation>
    <scope>IDENTIFICATION BY MASS SPECTROMETRY [LARGE SCALE ANALYSIS]</scope>
</reference>
<reference key="28">
    <citation type="journal article" date="2012" name="Proc. Natl. Acad. Sci. U.S.A.">
        <title>N-terminal acetylome analyses and functional insights of the N-terminal acetyltransferase NatB.</title>
        <authorList>
            <person name="Van Damme P."/>
            <person name="Lasa M."/>
            <person name="Polevoda B."/>
            <person name="Gazquez C."/>
            <person name="Elosegui-Artola A."/>
            <person name="Kim D.S."/>
            <person name="De Juan-Pardo E."/>
            <person name="Demeyer K."/>
            <person name="Hole K."/>
            <person name="Larrea E."/>
            <person name="Timmerman E."/>
            <person name="Prieto J."/>
            <person name="Arnesen T."/>
            <person name="Sherman F."/>
            <person name="Gevaert K."/>
            <person name="Aldabe R."/>
        </authorList>
    </citation>
    <scope>ACETYLATION [LARGE SCALE ANALYSIS] AT MET-1</scope>
    <scope>IDENTIFICATION BY MASS SPECTROMETRY [LARGE SCALE ANALYSIS]</scope>
</reference>
<reference key="29">
    <citation type="journal article" date="2013" name="Hum. Mol. Genet.">
        <title>CDK6 associates with the centrosome during mitosis and is mutated in a large Pakistani family with primary microcephaly.</title>
        <authorList>
            <person name="Hussain M.S."/>
            <person name="Baig S.M."/>
            <person name="Neumann S."/>
            <person name="Peche V.S."/>
            <person name="Szczepanski S."/>
            <person name="Nurnberg G."/>
            <person name="Tariq M."/>
            <person name="Jameel M."/>
            <person name="Khan T.N."/>
            <person name="Fatima A."/>
            <person name="Malik N.A."/>
            <person name="Ahmad I."/>
            <person name="Altmuller J."/>
            <person name="Frommolt P."/>
            <person name="Thiele H."/>
            <person name="Hohne W."/>
            <person name="Yigit G."/>
            <person name="Wollnik B."/>
            <person name="Neubauer B.A."/>
            <person name="Nurnberg P."/>
            <person name="Noegel A.A."/>
        </authorList>
    </citation>
    <scope>FUNCTION</scope>
    <scope>SUBCELLULAR LOCATION</scope>
    <scope>INVOLVEMENT IN MCPH12</scope>
    <scope>VARIANT MCPH12 THR-197</scope>
</reference>
<reference key="30">
    <citation type="journal article" date="1998" name="Nature">
        <title>Structural basis for inhibition of the cyclin-dependent kinase Cdk6 by the tumour suppressor p16INK4a.</title>
        <authorList>
            <person name="Russo A.A."/>
            <person name="Tong L."/>
            <person name="Lee J.O."/>
            <person name="Jeffrey P.D."/>
            <person name="Pavletich N.P."/>
        </authorList>
    </citation>
    <scope>X-RAY CRYSTALLOGRAPHY (2.8 ANGSTROMS) OF COMPLEXES WITH INK4A AND INK4D</scope>
</reference>
<reference key="31">
    <citation type="journal article" date="2000" name="Genes Dev.">
        <title>Structural basis of inhibition of CDK-cyclin complexes by INK4 inhibitors.</title>
        <authorList>
            <person name="Jeffrey P.D."/>
            <person name="Tong L."/>
            <person name="Pavletich N.P."/>
        </authorList>
    </citation>
    <scope>X-RAY CRYSTALLOGRAPHY (2.90 ANGSTROMS) IN COMPLEX WITH INHIBITOR CDKN2C/P18-INK4C</scope>
</reference>
<reference key="32">
    <citation type="journal article" date="2002" name="Nat. Struct. Biol.">
        <title>Structural basis for CDK6 activation by a virus-encoded cyclin.</title>
        <authorList>
            <person name="Schulze-Gahmen U."/>
            <person name="Kim S.-H."/>
        </authorList>
    </citation>
    <scope>X-RAY CRYSTALLOGRAPHY (3.10 ANGSTROMS) OF 1-308 IN COMPLEX WITH HERPESVIRUS SAIMIRI V-CYCLIN/ECLF2</scope>
    <scope>PHOSPHORYLATION AT THR-177</scope>
</reference>
<reference key="33">
    <citation type="journal article" date="2005" name="J. Med. Chem.">
        <title>Crystal structure of a human cyclin-dependent kinase 6 complex with a flavonol inhibitor, fisetin.</title>
        <authorList>
            <person name="Lu H."/>
            <person name="Chang D.J."/>
            <person name="Baratte B."/>
            <person name="Meijer L."/>
            <person name="Schulze-Gahmen U."/>
        </authorList>
    </citation>
    <scope>X-RAY CRYSTALLOGRAPHY (2.90 ANGSTROMS) OF 1-308 IN COMPLEX WITH INHIBITOR</scope>
</reference>
<reference key="34">
    <citation type="journal article" date="2006" name="J. Med. Chem.">
        <title>Toward understanding the structural basis of cyclin-dependent kinase 6 specific inhibition.</title>
        <authorList>
            <person name="Lu H."/>
            <person name="Schulze-Gahmen U."/>
        </authorList>
    </citation>
    <scope>X-RAY CRYSTALLOGRAPHY (2.80 ANGSTROMS) OF 1-308 IN COMPLEX WITH INHIBITORS AND V-CYCLIN</scope>
</reference>
<reference key="35">
    <citation type="journal article" date="2010" name="J. Med. Chem.">
        <title>4-(Pyrazol-4-yl)-pyrimidines as selective inhibitors of cyclin-dependent kinase 4/6.</title>
        <authorList>
            <person name="Cho Y.S."/>
            <person name="Borland M."/>
            <person name="Brain C."/>
            <person name="Chen C.H.-T."/>
            <person name="Cheng H."/>
            <person name="Chopra R."/>
            <person name="Chung K."/>
            <person name="Groarke J."/>
            <person name="He G."/>
            <person name="Hou Y."/>
            <person name="Kim S."/>
            <person name="Kovats S."/>
            <person name="Lu Y."/>
            <person name="O'Reilly M."/>
            <person name="Shen J."/>
            <person name="Smith T."/>
            <person name="Trakshel G."/>
            <person name="Voegtle M."/>
            <person name="Xu M."/>
            <person name="Xu M."/>
            <person name="Sung M.J."/>
        </authorList>
    </citation>
    <scope>X-RAY CRYSTALLOGRAPHY (2.60 ANGSTROMS) OF 1-301 IN COMPLEX WITH INHIBITORS</scope>
</reference>
<reference key="36">
    <citation type="journal article" date="2007" name="Nature">
        <title>Patterns of somatic mutation in human cancer genomes.</title>
        <authorList>
            <person name="Greenman C."/>
            <person name="Stephens P."/>
            <person name="Smith R."/>
            <person name="Dalgliesh G.L."/>
            <person name="Hunter C."/>
            <person name="Bignell G."/>
            <person name="Davies H."/>
            <person name="Teague J."/>
            <person name="Butler A."/>
            <person name="Stevens C."/>
            <person name="Edkins S."/>
            <person name="O'Meara S."/>
            <person name="Vastrik I."/>
            <person name="Schmidt E.E."/>
            <person name="Avis T."/>
            <person name="Barthorpe S."/>
            <person name="Bhamra G."/>
            <person name="Buck G."/>
            <person name="Choudhury B."/>
            <person name="Clements J."/>
            <person name="Cole J."/>
            <person name="Dicks E."/>
            <person name="Forbes S."/>
            <person name="Gray K."/>
            <person name="Halliday K."/>
            <person name="Harrison R."/>
            <person name="Hills K."/>
            <person name="Hinton J."/>
            <person name="Jenkinson A."/>
            <person name="Jones D."/>
            <person name="Menzies A."/>
            <person name="Mironenko T."/>
            <person name="Perry J."/>
            <person name="Raine K."/>
            <person name="Richardson D."/>
            <person name="Shepherd R."/>
            <person name="Small A."/>
            <person name="Tofts C."/>
            <person name="Varian J."/>
            <person name="Webb T."/>
            <person name="West S."/>
            <person name="Widaa S."/>
            <person name="Yates A."/>
            <person name="Cahill D.P."/>
            <person name="Louis D.N."/>
            <person name="Goldstraw P."/>
            <person name="Nicholson A.G."/>
            <person name="Brasseur F."/>
            <person name="Looijenga L."/>
            <person name="Weber B.L."/>
            <person name="Chiew Y.-E."/>
            <person name="DeFazio A."/>
            <person name="Greaves M.F."/>
            <person name="Green A.R."/>
            <person name="Campbell P."/>
            <person name="Birney E."/>
            <person name="Easton D.F."/>
            <person name="Chenevix-Trench G."/>
            <person name="Tan M.-H."/>
            <person name="Khoo S.K."/>
            <person name="Teh B.T."/>
            <person name="Yuen S.T."/>
            <person name="Leung S.Y."/>
            <person name="Wooster R."/>
            <person name="Futreal P.A."/>
            <person name="Stratton M.R."/>
        </authorList>
    </citation>
    <scope>VARIANTS [LARGE SCALE ANALYSIS] ASN-110 AND LEU-199</scope>
</reference>
<accession>Q00534</accession>
<accession>A4D1G0</accession>
<gene>
    <name type="primary">CDK6</name>
    <name type="synonym">CDKN6</name>
</gene>
<feature type="chain" id="PRO_0000085789" description="Cyclin-dependent kinase 6">
    <location>
        <begin position="1"/>
        <end position="326"/>
    </location>
</feature>
<feature type="domain" description="Protein kinase" evidence="3">
    <location>
        <begin position="13"/>
        <end position="300"/>
    </location>
</feature>
<feature type="active site" description="Proton acceptor">
    <location>
        <position position="145"/>
    </location>
</feature>
<feature type="binding site" evidence="3">
    <location>
        <begin position="19"/>
        <end position="27"/>
    </location>
    <ligand>
        <name>ATP</name>
        <dbReference type="ChEBI" id="CHEBI:30616"/>
    </ligand>
</feature>
<feature type="binding site" evidence="3">
    <location>
        <position position="43"/>
    </location>
    <ligand>
        <name>ATP</name>
        <dbReference type="ChEBI" id="CHEBI:30616"/>
    </ligand>
</feature>
<feature type="modified residue" description="N-acetylmethionine" evidence="28">
    <location>
        <position position="1"/>
    </location>
</feature>
<feature type="modified residue" description="Phosphotyrosine" evidence="25">
    <location>
        <position position="13"/>
    </location>
</feature>
<feature type="modified residue" description="Phosphotyrosine" evidence="25 26">
    <location>
        <position position="24"/>
    </location>
</feature>
<feature type="modified residue" description="Phosphothreonine" evidence="26">
    <location>
        <position position="49"/>
    </location>
</feature>
<feature type="modified residue" description="Phosphothreonine" evidence="26">
    <location>
        <position position="70"/>
    </location>
</feature>
<feature type="modified residue" description="Phosphothreonine" evidence="5">
    <location>
        <position position="177"/>
    </location>
</feature>
<feature type="modified residue" description="N6-acetyllysine" evidence="27">
    <location>
        <position position="264"/>
    </location>
</feature>
<feature type="modified residue" description="Phosphothreonine" evidence="26">
    <location>
        <position position="325"/>
    </location>
</feature>
<feature type="sequence variant" id="VAR_041978" description="In dbSNP:rs35654944." evidence="14">
    <original>D</original>
    <variation>N</variation>
    <location>
        <position position="110"/>
    </location>
</feature>
<feature type="sequence variant" id="VAR_072638" description="In MCPH12; dbSNP:rs606231255." evidence="21">
    <original>A</original>
    <variation>T</variation>
    <location>
        <position position="197"/>
    </location>
</feature>
<feature type="sequence variant" id="VAR_041979" description="In a metastatic melanoma sample; somatic mutation." evidence="14">
    <original>P</original>
    <variation>L</variation>
    <location>
        <position position="199"/>
    </location>
</feature>
<feature type="helix" evidence="30">
    <location>
        <begin position="9"/>
        <end position="11"/>
    </location>
</feature>
<feature type="strand" evidence="30">
    <location>
        <begin position="13"/>
        <end position="22"/>
    </location>
</feature>
<feature type="strand" evidence="30">
    <location>
        <begin position="25"/>
        <end position="32"/>
    </location>
</feature>
<feature type="turn" evidence="30">
    <location>
        <begin position="33"/>
        <end position="37"/>
    </location>
</feature>
<feature type="strand" evidence="30">
    <location>
        <begin position="39"/>
        <end position="49"/>
    </location>
</feature>
<feature type="helix" evidence="30">
    <location>
        <begin position="58"/>
        <end position="70"/>
    </location>
</feature>
<feature type="strand" evidence="30">
    <location>
        <begin position="79"/>
        <end position="87"/>
    </location>
</feature>
<feature type="strand" evidence="30">
    <location>
        <begin position="89"/>
        <end position="99"/>
    </location>
</feature>
<feature type="strand" evidence="34">
    <location>
        <begin position="102"/>
        <end position="104"/>
    </location>
</feature>
<feature type="helix" evidence="30">
    <location>
        <begin position="105"/>
        <end position="111"/>
    </location>
</feature>
<feature type="turn" evidence="33">
    <location>
        <begin position="113"/>
        <end position="115"/>
    </location>
</feature>
<feature type="helix" evidence="30">
    <location>
        <begin position="119"/>
        <end position="138"/>
    </location>
</feature>
<feature type="helix" evidence="30">
    <location>
        <begin position="148"/>
        <end position="150"/>
    </location>
</feature>
<feature type="strand" evidence="30">
    <location>
        <begin position="151"/>
        <end position="153"/>
    </location>
</feature>
<feature type="strand" evidence="30">
    <location>
        <begin position="159"/>
        <end position="161"/>
    </location>
</feature>
<feature type="helix" evidence="30">
    <location>
        <begin position="172"/>
        <end position="176"/>
    </location>
</feature>
<feature type="strand" evidence="29">
    <location>
        <begin position="180"/>
        <end position="182"/>
    </location>
</feature>
<feature type="helix" evidence="32">
    <location>
        <begin position="183"/>
        <end position="185"/>
    </location>
</feature>
<feature type="helix" evidence="30">
    <location>
        <begin position="188"/>
        <end position="191"/>
    </location>
</feature>
<feature type="helix" evidence="30">
    <location>
        <begin position="199"/>
        <end position="214"/>
    </location>
</feature>
<feature type="helix" evidence="30">
    <location>
        <begin position="224"/>
        <end position="235"/>
    </location>
</feature>
<feature type="helix" evidence="30">
    <location>
        <begin position="240"/>
        <end position="242"/>
    </location>
</feature>
<feature type="strand" evidence="31">
    <location>
        <begin position="245"/>
        <end position="249"/>
    </location>
</feature>
<feature type="helix" evidence="30">
    <location>
        <begin position="251"/>
        <end position="253"/>
    </location>
</feature>
<feature type="helix" evidence="30">
    <location>
        <begin position="262"/>
        <end position="264"/>
    </location>
</feature>
<feature type="strand" evidence="31">
    <location>
        <begin position="266"/>
        <end position="268"/>
    </location>
</feature>
<feature type="helix" evidence="30">
    <location>
        <begin position="271"/>
        <end position="280"/>
    </location>
</feature>
<feature type="turn" evidence="30">
    <location>
        <begin position="285"/>
        <end position="287"/>
    </location>
</feature>
<feature type="helix" evidence="30">
    <location>
        <begin position="291"/>
        <end position="295"/>
    </location>
</feature>
<feature type="helix" evidence="30">
    <location>
        <begin position="298"/>
        <end position="300"/>
    </location>
</feature>
<name>CDK6_HUMAN</name>